<protein>
    <recommendedName>
        <fullName>Pleckstrin homology domain-containing family N member 1</fullName>
        <shortName>PH domain-containing family N member 1</shortName>
    </recommendedName>
    <alternativeName>
        <fullName evidence="10 11">Cardiolipin and phosphatidic acid-binding protein</fullName>
    </alternativeName>
</protein>
<organism>
    <name type="scientific">Homo sapiens</name>
    <name type="common">Human</name>
    <dbReference type="NCBI Taxonomy" id="9606"/>
    <lineage>
        <taxon>Eukaryota</taxon>
        <taxon>Metazoa</taxon>
        <taxon>Chordata</taxon>
        <taxon>Craniata</taxon>
        <taxon>Vertebrata</taxon>
        <taxon>Euteleostomi</taxon>
        <taxon>Mammalia</taxon>
        <taxon>Eutheria</taxon>
        <taxon>Euarchontoglires</taxon>
        <taxon>Primates</taxon>
        <taxon>Haplorrhini</taxon>
        <taxon>Catarrhini</taxon>
        <taxon>Hominidae</taxon>
        <taxon>Homo</taxon>
    </lineage>
</organism>
<dbReference type="EMBL" id="AL136730">
    <property type="protein sequence ID" value="CAB66664.1"/>
    <property type="molecule type" value="mRNA"/>
</dbReference>
<dbReference type="EMBL" id="AL645608">
    <property type="status" value="NOT_ANNOTATED_CDS"/>
    <property type="molecule type" value="Genomic_DNA"/>
</dbReference>
<dbReference type="EMBL" id="CH471183">
    <property type="protein sequence ID" value="EAW56299.1"/>
    <property type="molecule type" value="Genomic_DNA"/>
</dbReference>
<dbReference type="EMBL" id="BC101386">
    <property type="protein sequence ID" value="AAI01387.1"/>
    <property type="molecule type" value="mRNA"/>
</dbReference>
<dbReference type="EMBL" id="BC101387">
    <property type="protein sequence ID" value="AAI01388.1"/>
    <property type="molecule type" value="mRNA"/>
</dbReference>
<dbReference type="CCDS" id="CCDS4.1">
    <molecule id="Q494U1-1"/>
</dbReference>
<dbReference type="CCDS" id="CCDS53256.1">
    <molecule id="Q494U1-3"/>
</dbReference>
<dbReference type="CCDS" id="CCDS90835.1">
    <molecule id="Q494U1-2"/>
</dbReference>
<dbReference type="RefSeq" id="NP_001153656.1">
    <molecule id="Q494U1-3"/>
    <property type="nucleotide sequence ID" value="NM_001160184.2"/>
</dbReference>
<dbReference type="RefSeq" id="NP_001397626.1">
    <molecule id="Q494U1-2"/>
    <property type="nucleotide sequence ID" value="NM_001410697.1"/>
</dbReference>
<dbReference type="RefSeq" id="NP_115505.2">
    <molecule id="Q494U1-1"/>
    <property type="nucleotide sequence ID" value="NM_032129.3"/>
</dbReference>
<dbReference type="SMR" id="Q494U1"/>
<dbReference type="BioGRID" id="123864">
    <property type="interactions" value="57"/>
</dbReference>
<dbReference type="FunCoup" id="Q494U1">
    <property type="interactions" value="142"/>
</dbReference>
<dbReference type="IntAct" id="Q494U1">
    <property type="interactions" value="61"/>
</dbReference>
<dbReference type="MINT" id="Q494U1"/>
<dbReference type="STRING" id="9606.ENSP00000368720"/>
<dbReference type="GlyGen" id="Q494U1">
    <property type="glycosylation" value="1 site"/>
</dbReference>
<dbReference type="iPTMnet" id="Q494U1"/>
<dbReference type="PhosphoSitePlus" id="Q494U1"/>
<dbReference type="SwissPalm" id="Q494U1"/>
<dbReference type="BioMuta" id="PLEKHN1"/>
<dbReference type="DMDM" id="160419245"/>
<dbReference type="jPOST" id="Q494U1"/>
<dbReference type="MassIVE" id="Q494U1"/>
<dbReference type="PaxDb" id="9606-ENSP00000368720"/>
<dbReference type="PeptideAtlas" id="Q494U1"/>
<dbReference type="ProteomicsDB" id="61938">
    <molecule id="Q494U1-1"/>
</dbReference>
<dbReference type="ProteomicsDB" id="61939">
    <molecule id="Q494U1-2"/>
</dbReference>
<dbReference type="ProteomicsDB" id="61940">
    <molecule id="Q494U1-3"/>
</dbReference>
<dbReference type="Antibodypedia" id="51118">
    <property type="antibodies" value="10 antibodies from 6 providers"/>
</dbReference>
<dbReference type="DNASU" id="84069"/>
<dbReference type="Ensembl" id="ENST00000379407.7">
    <molecule id="Q494U1-3"/>
    <property type="protein sequence ID" value="ENSP00000368717.2"/>
    <property type="gene ID" value="ENSG00000187583.11"/>
</dbReference>
<dbReference type="Ensembl" id="ENST00000379409.6">
    <molecule id="Q494U1-2"/>
    <property type="protein sequence ID" value="ENSP00000368719.2"/>
    <property type="gene ID" value="ENSG00000187583.11"/>
</dbReference>
<dbReference type="Ensembl" id="ENST00000379410.8">
    <molecule id="Q494U1-1"/>
    <property type="protein sequence ID" value="ENSP00000368720.3"/>
    <property type="gene ID" value="ENSG00000187583.11"/>
</dbReference>
<dbReference type="GeneID" id="84069"/>
<dbReference type="KEGG" id="hsa:84069"/>
<dbReference type="MANE-Select" id="ENST00000379410.8">
    <property type="protein sequence ID" value="ENSP00000368720.3"/>
    <property type="RefSeq nucleotide sequence ID" value="NM_032129.3"/>
    <property type="RefSeq protein sequence ID" value="NP_115505.2"/>
</dbReference>
<dbReference type="UCSC" id="uc001acd.4">
    <molecule id="Q494U1-1"/>
    <property type="organism name" value="human"/>
</dbReference>
<dbReference type="AGR" id="HGNC:25284"/>
<dbReference type="CTD" id="84069"/>
<dbReference type="DisGeNET" id="84069"/>
<dbReference type="GeneCards" id="PLEKHN1"/>
<dbReference type="HGNC" id="HGNC:25284">
    <property type="gene designation" value="PLEKHN1"/>
</dbReference>
<dbReference type="HPA" id="ENSG00000187583">
    <property type="expression patterns" value="Tissue enhanced (esophagus, skin, vagina)"/>
</dbReference>
<dbReference type="MIM" id="621052">
    <property type="type" value="gene"/>
</dbReference>
<dbReference type="neXtProt" id="NX_Q494U1"/>
<dbReference type="OpenTargets" id="ENSG00000187583"/>
<dbReference type="PharmGKB" id="PA142671166"/>
<dbReference type="VEuPathDB" id="HostDB:ENSG00000187583"/>
<dbReference type="eggNOG" id="ENOG502QSRE">
    <property type="taxonomic scope" value="Eukaryota"/>
</dbReference>
<dbReference type="GeneTree" id="ENSGT00390000003618"/>
<dbReference type="HOGENOM" id="CLU_031048_0_0_1"/>
<dbReference type="InParanoid" id="Q494U1"/>
<dbReference type="OMA" id="HVLCPSQ"/>
<dbReference type="OrthoDB" id="9936524at2759"/>
<dbReference type="PAN-GO" id="Q494U1">
    <property type="GO annotations" value="9 GO annotations based on evolutionary models"/>
</dbReference>
<dbReference type="PhylomeDB" id="Q494U1"/>
<dbReference type="TreeFam" id="TF316105"/>
<dbReference type="PathwayCommons" id="Q494U1"/>
<dbReference type="SignaLink" id="Q494U1"/>
<dbReference type="BioGRID-ORCS" id="84069">
    <property type="hits" value="105 hits in 1139 CRISPR screens"/>
</dbReference>
<dbReference type="GenomeRNAi" id="84069"/>
<dbReference type="Pharos" id="Q494U1">
    <property type="development level" value="Tbio"/>
</dbReference>
<dbReference type="PRO" id="PR:Q494U1"/>
<dbReference type="Proteomes" id="UP000005640">
    <property type="component" value="Chromosome 1"/>
</dbReference>
<dbReference type="RNAct" id="Q494U1">
    <property type="molecule type" value="protein"/>
</dbReference>
<dbReference type="Bgee" id="ENSG00000187583">
    <property type="expression patterns" value="Expressed in lower esophagus mucosa and 118 other cell types or tissues"/>
</dbReference>
<dbReference type="ExpressionAtlas" id="Q494U1">
    <property type="expression patterns" value="baseline and differential"/>
</dbReference>
<dbReference type="GO" id="GO:0005856">
    <property type="term" value="C:cytoskeleton"/>
    <property type="evidence" value="ECO:0000314"/>
    <property type="project" value="UniProtKB"/>
</dbReference>
<dbReference type="GO" id="GO:0005829">
    <property type="term" value="C:cytosol"/>
    <property type="evidence" value="ECO:0000314"/>
    <property type="project" value="HPA"/>
</dbReference>
<dbReference type="GO" id="GO:0031966">
    <property type="term" value="C:mitochondrial membrane"/>
    <property type="evidence" value="ECO:0000314"/>
    <property type="project" value="UniProtKB"/>
</dbReference>
<dbReference type="GO" id="GO:0005739">
    <property type="term" value="C:mitochondrion"/>
    <property type="evidence" value="ECO:0000314"/>
    <property type="project" value="UniProtKB"/>
</dbReference>
<dbReference type="GO" id="GO:0005886">
    <property type="term" value="C:plasma membrane"/>
    <property type="evidence" value="ECO:0000314"/>
    <property type="project" value="HPA"/>
</dbReference>
<dbReference type="GO" id="GO:1901612">
    <property type="term" value="F:cardiolipin binding"/>
    <property type="evidence" value="ECO:0000314"/>
    <property type="project" value="UniProtKB"/>
</dbReference>
<dbReference type="GO" id="GO:0070300">
    <property type="term" value="F:phosphatidic acid binding"/>
    <property type="evidence" value="ECO:0000314"/>
    <property type="project" value="UniProtKB"/>
</dbReference>
<dbReference type="GO" id="GO:1901981">
    <property type="term" value="F:phosphatidylinositol phosphate binding"/>
    <property type="evidence" value="ECO:0000314"/>
    <property type="project" value="UniProtKB"/>
</dbReference>
<dbReference type="GO" id="GO:0001786">
    <property type="term" value="F:phosphatidylserine binding"/>
    <property type="evidence" value="ECO:0000314"/>
    <property type="project" value="UniProtKB"/>
</dbReference>
<dbReference type="GO" id="GO:0061158">
    <property type="term" value="P:3'-UTR-mediated mRNA destabilization"/>
    <property type="evidence" value="ECO:0000314"/>
    <property type="project" value="UniProtKB"/>
</dbReference>
<dbReference type="GO" id="GO:0043065">
    <property type="term" value="P:positive regulation of apoptotic process"/>
    <property type="evidence" value="ECO:0000315"/>
    <property type="project" value="UniProtKB"/>
</dbReference>
<dbReference type="GO" id="GO:0001666">
    <property type="term" value="P:response to hypoxia"/>
    <property type="evidence" value="ECO:0000314"/>
    <property type="project" value="UniProtKB"/>
</dbReference>
<dbReference type="CDD" id="cd13323">
    <property type="entry name" value="PH_PLEKHN1"/>
    <property type="match status" value="1"/>
</dbReference>
<dbReference type="FunFam" id="2.30.29.30:FF:000325">
    <property type="entry name" value="Pleckstrin homology domain-containing family N member 1"/>
    <property type="match status" value="1"/>
</dbReference>
<dbReference type="FunFam" id="2.30.29.30:FF:000494">
    <property type="entry name" value="Probable pleckstrin homology domain-containing family N member 1"/>
    <property type="match status" value="1"/>
</dbReference>
<dbReference type="Gene3D" id="2.30.29.30">
    <property type="entry name" value="Pleckstrin-homology domain (PH domain)/Phosphotyrosine-binding domain (PTB)"/>
    <property type="match status" value="2"/>
</dbReference>
<dbReference type="InterPro" id="IPR011993">
    <property type="entry name" value="PH-like_dom_sf"/>
</dbReference>
<dbReference type="InterPro" id="IPR001849">
    <property type="entry name" value="PH_domain"/>
</dbReference>
<dbReference type="InterPro" id="IPR042835">
    <property type="entry name" value="PLEKHN1"/>
</dbReference>
<dbReference type="InterPro" id="IPR037839">
    <property type="entry name" value="PLEKHN1_PH"/>
</dbReference>
<dbReference type="PANTHER" id="PTHR46882">
    <property type="entry name" value="PLECKSTRIN HOMOLOGY DOMAIN-CONTAINING FAMILY N MEMBER 1"/>
    <property type="match status" value="1"/>
</dbReference>
<dbReference type="PANTHER" id="PTHR46882:SF1">
    <property type="entry name" value="PLECKSTRIN HOMOLOGY DOMAIN-CONTAINING FAMILY N MEMBER 1"/>
    <property type="match status" value="1"/>
</dbReference>
<dbReference type="SMART" id="SM00233">
    <property type="entry name" value="PH"/>
    <property type="match status" value="2"/>
</dbReference>
<dbReference type="SUPFAM" id="SSF50729">
    <property type="entry name" value="PH domain-like"/>
    <property type="match status" value="2"/>
</dbReference>
<gene>
    <name type="primary">PLEKHN1</name>
    <name evidence="10 11" type="synonym">CLPABP</name>
</gene>
<evidence type="ECO:0000250" key="1">
    <source>
        <dbReference type="UniProtKB" id="Q8C886"/>
    </source>
</evidence>
<evidence type="ECO:0000256" key="2">
    <source>
        <dbReference type="SAM" id="MobiDB-lite"/>
    </source>
</evidence>
<evidence type="ECO:0000269" key="3">
    <source>
    </source>
</evidence>
<evidence type="ECO:0000269" key="4">
    <source>
    </source>
</evidence>
<evidence type="ECO:0000269" key="5">
    <source>
    </source>
</evidence>
<evidence type="ECO:0000269" key="6">
    <source>
    </source>
</evidence>
<evidence type="ECO:0000269" key="7">
    <source>
    </source>
</evidence>
<evidence type="ECO:0000269" key="8">
    <source>
    </source>
</evidence>
<evidence type="ECO:0000303" key="9">
    <source>
    </source>
</evidence>
<evidence type="ECO:0000303" key="10">
    <source>
    </source>
</evidence>
<evidence type="ECO:0000303" key="11">
    <source>
    </source>
</evidence>
<evidence type="ECO:0000305" key="12"/>
<evidence type="ECO:0007744" key="13">
    <source>
    </source>
</evidence>
<feature type="initiator methionine" description="Removed" evidence="5 7">
    <location>
        <position position="1"/>
    </location>
</feature>
<feature type="chain" id="PRO_0000309363" description="Pleckstrin homology domain-containing family N member 1">
    <location>
        <begin position="2"/>
        <end position="611"/>
    </location>
</feature>
<feature type="domain" description="PH 1">
    <location>
        <begin position="96"/>
        <end position="192"/>
    </location>
</feature>
<feature type="domain" description="PH 2">
    <location>
        <begin position="222"/>
        <end position="319"/>
    </location>
</feature>
<feature type="region of interest" description="Disordered" evidence="2">
    <location>
        <begin position="1"/>
        <end position="45"/>
    </location>
</feature>
<feature type="region of interest" description="Interaction with C1QBP" evidence="4">
    <location>
        <begin position="61"/>
        <end position="100"/>
    </location>
</feature>
<feature type="region of interest" description="Disordered" evidence="2">
    <location>
        <begin position="323"/>
        <end position="424"/>
    </location>
</feature>
<feature type="region of interest" description="Disordered" evidence="2">
    <location>
        <begin position="438"/>
        <end position="468"/>
    </location>
</feature>
<feature type="region of interest" description="Disordered" evidence="2">
    <location>
        <begin position="483"/>
        <end position="611"/>
    </location>
</feature>
<feature type="compositionally biased region" description="Low complexity" evidence="2">
    <location>
        <begin position="341"/>
        <end position="350"/>
    </location>
</feature>
<feature type="compositionally biased region" description="Polar residues" evidence="2">
    <location>
        <begin position="360"/>
        <end position="391"/>
    </location>
</feature>
<feature type="compositionally biased region" description="Low complexity" evidence="2">
    <location>
        <begin position="498"/>
        <end position="509"/>
    </location>
</feature>
<feature type="compositionally biased region" description="Basic and acidic residues" evidence="2">
    <location>
        <begin position="570"/>
        <end position="585"/>
    </location>
</feature>
<feature type="modified residue" description="Phosphotyrosine" evidence="4">
    <location>
        <position position="302"/>
    </location>
</feature>
<feature type="modified residue" description="Phosphotyrosine" evidence="4">
    <location>
        <position position="456"/>
    </location>
</feature>
<feature type="modified residue" description="Phosphoserine" evidence="13">
    <location>
        <position position="559"/>
    </location>
</feature>
<feature type="lipid moiety-binding region" description="N-myristoyl glycine" evidence="5 7">
    <location>
        <position position="2"/>
    </location>
</feature>
<feature type="splice variant" id="VSP_059838" description="In isoform 2." evidence="9">
    <original>G</original>
    <variation>GVWDASRAPRGTPDPGLGEGPALWLRSTCVYVCALSALPAG</variation>
    <location>
        <position position="162"/>
    </location>
</feature>
<feature type="splice variant" id="VSP_059839" description="In isoform 2 and isoform 3." evidence="9">
    <original>Q</original>
    <variation>QGSCGDELPWTLQ</variation>
    <location>
        <position position="204"/>
    </location>
</feature>
<feature type="splice variant" id="VSP_059840" description="In isoform 3." evidence="9">
    <location>
        <begin position="385"/>
        <end position="431"/>
    </location>
</feature>
<feature type="sequence variant" id="VAR_036946" description="In dbSNP:rs3829740." evidence="3">
    <original>R</original>
    <variation>P</variation>
    <location>
        <position position="487"/>
    </location>
</feature>
<feature type="mutagenesis site" description="Loss of myristoylation, reduced protein stability, morphological alterations in mitochondria but no effect on its mitochondrial localization. Loss of cell membrane localization leading to localization to intracellular organelles." evidence="5 7">
    <original>G</original>
    <variation>A</variation>
    <location>
        <position position="2"/>
    </location>
</feature>
<feature type="mutagenesis site" description="Loss of phosphorylation and interaction with C1QBP; when associated with F-456." evidence="4">
    <original>Y</original>
    <variation>F</variation>
    <location>
        <position position="302"/>
    </location>
</feature>
<feature type="mutagenesis site" description="Loss of phosphorylation and interaction with C1QBP; when associated with F-302." evidence="4">
    <original>Y</original>
    <variation>F</variation>
    <location>
        <position position="456"/>
    </location>
</feature>
<feature type="sequence conflict" description="In Ref. 4; AAI01388." evidence="12" ref="4">
    <original>P</original>
    <variation>S</variation>
    <location>
        <position position="560"/>
    </location>
</feature>
<keyword id="KW-0025">Alternative splicing</keyword>
<keyword id="KW-1003">Cell membrane</keyword>
<keyword id="KW-0449">Lipoprotein</keyword>
<keyword id="KW-0472">Membrane</keyword>
<keyword id="KW-0496">Mitochondrion</keyword>
<keyword id="KW-0519">Myristate</keyword>
<keyword id="KW-0597">Phosphoprotein</keyword>
<keyword id="KW-1267">Proteomics identification</keyword>
<keyword id="KW-1185">Reference proteome</keyword>
<keyword id="KW-0677">Repeat</keyword>
<name>PKHN1_HUMAN</name>
<proteinExistence type="evidence at protein level"/>
<reference key="1">
    <citation type="journal article" date="2001" name="Genome Res.">
        <title>Towards a catalog of human genes and proteins: sequencing and analysis of 500 novel complete protein coding human cDNAs.</title>
        <authorList>
            <person name="Wiemann S."/>
            <person name="Weil B."/>
            <person name="Wellenreuther R."/>
            <person name="Gassenhuber J."/>
            <person name="Glassl S."/>
            <person name="Ansorge W."/>
            <person name="Boecher M."/>
            <person name="Bloecker H."/>
            <person name="Bauersachs S."/>
            <person name="Blum H."/>
            <person name="Lauber J."/>
            <person name="Duesterhoeft A."/>
            <person name="Beyer A."/>
            <person name="Koehrer K."/>
            <person name="Strack N."/>
            <person name="Mewes H.-W."/>
            <person name="Ottenwaelder B."/>
            <person name="Obermaier B."/>
            <person name="Tampe J."/>
            <person name="Heubner D."/>
            <person name="Wambutt R."/>
            <person name="Korn B."/>
            <person name="Klein M."/>
            <person name="Poustka A."/>
        </authorList>
    </citation>
    <scope>NUCLEOTIDE SEQUENCE [LARGE SCALE MRNA]</scope>
    <scope>VARIANT PRO-487</scope>
    <source>
        <tissue>Testis</tissue>
    </source>
</reference>
<reference key="2">
    <citation type="journal article" date="2006" name="Nature">
        <title>The DNA sequence and biological annotation of human chromosome 1.</title>
        <authorList>
            <person name="Gregory S.G."/>
            <person name="Barlow K.F."/>
            <person name="McLay K.E."/>
            <person name="Kaul R."/>
            <person name="Swarbreck D."/>
            <person name="Dunham A."/>
            <person name="Scott C.E."/>
            <person name="Howe K.L."/>
            <person name="Woodfine K."/>
            <person name="Spencer C.C.A."/>
            <person name="Jones M.C."/>
            <person name="Gillson C."/>
            <person name="Searle S."/>
            <person name="Zhou Y."/>
            <person name="Kokocinski F."/>
            <person name="McDonald L."/>
            <person name="Evans R."/>
            <person name="Phillips K."/>
            <person name="Atkinson A."/>
            <person name="Cooper R."/>
            <person name="Jones C."/>
            <person name="Hall R.E."/>
            <person name="Andrews T.D."/>
            <person name="Lloyd C."/>
            <person name="Ainscough R."/>
            <person name="Almeida J.P."/>
            <person name="Ambrose K.D."/>
            <person name="Anderson F."/>
            <person name="Andrew R.W."/>
            <person name="Ashwell R.I.S."/>
            <person name="Aubin K."/>
            <person name="Babbage A.K."/>
            <person name="Bagguley C.L."/>
            <person name="Bailey J."/>
            <person name="Beasley H."/>
            <person name="Bethel G."/>
            <person name="Bird C.P."/>
            <person name="Bray-Allen S."/>
            <person name="Brown J.Y."/>
            <person name="Brown A.J."/>
            <person name="Buckley D."/>
            <person name="Burton J."/>
            <person name="Bye J."/>
            <person name="Carder C."/>
            <person name="Chapman J.C."/>
            <person name="Clark S.Y."/>
            <person name="Clarke G."/>
            <person name="Clee C."/>
            <person name="Cobley V."/>
            <person name="Collier R.E."/>
            <person name="Corby N."/>
            <person name="Coville G.J."/>
            <person name="Davies J."/>
            <person name="Deadman R."/>
            <person name="Dunn M."/>
            <person name="Earthrowl M."/>
            <person name="Ellington A.G."/>
            <person name="Errington H."/>
            <person name="Frankish A."/>
            <person name="Frankland J."/>
            <person name="French L."/>
            <person name="Garner P."/>
            <person name="Garnett J."/>
            <person name="Gay L."/>
            <person name="Ghori M.R.J."/>
            <person name="Gibson R."/>
            <person name="Gilby L.M."/>
            <person name="Gillett W."/>
            <person name="Glithero R.J."/>
            <person name="Grafham D.V."/>
            <person name="Griffiths C."/>
            <person name="Griffiths-Jones S."/>
            <person name="Grocock R."/>
            <person name="Hammond S."/>
            <person name="Harrison E.S.I."/>
            <person name="Hart E."/>
            <person name="Haugen E."/>
            <person name="Heath P.D."/>
            <person name="Holmes S."/>
            <person name="Holt K."/>
            <person name="Howden P.J."/>
            <person name="Hunt A.R."/>
            <person name="Hunt S.E."/>
            <person name="Hunter G."/>
            <person name="Isherwood J."/>
            <person name="James R."/>
            <person name="Johnson C."/>
            <person name="Johnson D."/>
            <person name="Joy A."/>
            <person name="Kay M."/>
            <person name="Kershaw J.K."/>
            <person name="Kibukawa M."/>
            <person name="Kimberley A.M."/>
            <person name="King A."/>
            <person name="Knights A.J."/>
            <person name="Lad H."/>
            <person name="Laird G."/>
            <person name="Lawlor S."/>
            <person name="Leongamornlert D.A."/>
            <person name="Lloyd D.M."/>
            <person name="Loveland J."/>
            <person name="Lovell J."/>
            <person name="Lush M.J."/>
            <person name="Lyne R."/>
            <person name="Martin S."/>
            <person name="Mashreghi-Mohammadi M."/>
            <person name="Matthews L."/>
            <person name="Matthews N.S.W."/>
            <person name="McLaren S."/>
            <person name="Milne S."/>
            <person name="Mistry S."/>
            <person name="Moore M.J.F."/>
            <person name="Nickerson T."/>
            <person name="O'Dell C.N."/>
            <person name="Oliver K."/>
            <person name="Palmeiri A."/>
            <person name="Palmer S.A."/>
            <person name="Parker A."/>
            <person name="Patel D."/>
            <person name="Pearce A.V."/>
            <person name="Peck A.I."/>
            <person name="Pelan S."/>
            <person name="Phelps K."/>
            <person name="Phillimore B.J."/>
            <person name="Plumb R."/>
            <person name="Rajan J."/>
            <person name="Raymond C."/>
            <person name="Rouse G."/>
            <person name="Saenphimmachak C."/>
            <person name="Sehra H.K."/>
            <person name="Sheridan E."/>
            <person name="Shownkeen R."/>
            <person name="Sims S."/>
            <person name="Skuce C.D."/>
            <person name="Smith M."/>
            <person name="Steward C."/>
            <person name="Subramanian S."/>
            <person name="Sycamore N."/>
            <person name="Tracey A."/>
            <person name="Tromans A."/>
            <person name="Van Helmond Z."/>
            <person name="Wall M."/>
            <person name="Wallis J.M."/>
            <person name="White S."/>
            <person name="Whitehead S.L."/>
            <person name="Wilkinson J.E."/>
            <person name="Willey D.L."/>
            <person name="Williams H."/>
            <person name="Wilming L."/>
            <person name="Wray P.W."/>
            <person name="Wu Z."/>
            <person name="Coulson A."/>
            <person name="Vaudin M."/>
            <person name="Sulston J.E."/>
            <person name="Durbin R.M."/>
            <person name="Hubbard T."/>
            <person name="Wooster R."/>
            <person name="Dunham I."/>
            <person name="Carter N.P."/>
            <person name="McVean G."/>
            <person name="Ross M.T."/>
            <person name="Harrow J."/>
            <person name="Olson M.V."/>
            <person name="Beck S."/>
            <person name="Rogers J."/>
            <person name="Bentley D.R."/>
        </authorList>
    </citation>
    <scope>NUCLEOTIDE SEQUENCE [LARGE SCALE GENOMIC DNA]</scope>
</reference>
<reference key="3">
    <citation type="submission" date="2006-12" db="EMBL/GenBank/DDBJ databases">
        <authorList>
            <person name="Mural R.J."/>
            <person name="Istrail S."/>
            <person name="Sutton G.G."/>
            <person name="Florea L."/>
            <person name="Halpern A.L."/>
            <person name="Mobarry C.M."/>
            <person name="Lippert R."/>
            <person name="Walenz B."/>
            <person name="Shatkay H."/>
            <person name="Dew I."/>
            <person name="Miller J.R."/>
            <person name="Flanigan M.J."/>
            <person name="Edwards N.J."/>
            <person name="Bolanos R."/>
            <person name="Fasulo D."/>
            <person name="Halldorsson B.V."/>
            <person name="Hannenhalli S."/>
            <person name="Turner R."/>
            <person name="Yooseph S."/>
            <person name="Lu F."/>
            <person name="Nusskern D.R."/>
            <person name="Shue B.C."/>
            <person name="Zheng X.H."/>
            <person name="Zhong F."/>
            <person name="Delcher A.L."/>
            <person name="Huson D.H."/>
            <person name="Kravitz S.A."/>
            <person name="Mouchard L."/>
            <person name="Reinert K."/>
            <person name="Remington K.A."/>
            <person name="Clark A.G."/>
            <person name="Waterman M.S."/>
            <person name="Eichler E.E."/>
            <person name="Adams M.D."/>
            <person name="Hunkapiller M.W."/>
            <person name="Myers E.W."/>
            <person name="Venter J.C."/>
        </authorList>
    </citation>
    <scope>NUCLEOTIDE SEQUENCE [LARGE SCALE GENOMIC DNA]</scope>
</reference>
<reference key="4">
    <citation type="journal article" date="2004" name="Genome Res.">
        <title>The status, quality, and expansion of the NIH full-length cDNA project: the Mammalian Gene Collection (MGC).</title>
        <authorList>
            <consortium name="The MGC Project Team"/>
        </authorList>
    </citation>
    <scope>NUCLEOTIDE SEQUENCE [LARGE SCALE MRNA] (ISOFORMS 2 AND 3)</scope>
</reference>
<reference key="5">
    <citation type="journal article" date="2008" name="Biochim. Biophys. Acta">
        <title>Novel tyrosine phosphorylated and cardiolipin-binding protein CLPABP functions as mitochondrial RNA granule.</title>
        <authorList>
            <person name="Sano E."/>
            <person name="Shono S."/>
            <person name="Tashiro K."/>
            <person name="Konishi H."/>
            <person name="Yamauchi E."/>
            <person name="Taniguchi H."/>
        </authorList>
    </citation>
    <scope>FUNCTION</scope>
    <scope>INTERACTION WITH C1QBP AND ELAVL1</scope>
    <scope>SUBCELLULAR LOCATION</scope>
    <scope>PHOSPHORYLATION AT TYR-302 AND TYR-456</scope>
    <scope>MUTAGENESIS OF TYR-302 AND TYR-456</scope>
    <scope>TISSUE SPECIFICITY</scope>
    <scope>DOMAIN PH</scope>
</reference>
<reference key="6">
    <citation type="journal article" date="2008" name="Proc. Natl. Acad. Sci. U.S.A.">
        <title>A quantitative atlas of mitotic phosphorylation.</title>
        <authorList>
            <person name="Dephoure N."/>
            <person name="Zhou C."/>
            <person name="Villen J."/>
            <person name="Beausoleil S.A."/>
            <person name="Bakalarski C.E."/>
            <person name="Elledge S.J."/>
            <person name="Gygi S.P."/>
        </authorList>
    </citation>
    <scope>IDENTIFICATION BY MASS SPECTROMETRY [LARGE SCALE ANALYSIS]</scope>
    <source>
        <tissue>Cervix carcinoma</tissue>
    </source>
</reference>
<reference key="7">
    <citation type="journal article" date="2013" name="J. Proteome Res.">
        <title>Toward a comprehensive characterization of a human cancer cell phosphoproteome.</title>
        <authorList>
            <person name="Zhou H."/>
            <person name="Di Palma S."/>
            <person name="Preisinger C."/>
            <person name="Peng M."/>
            <person name="Polat A.N."/>
            <person name="Heck A.J."/>
            <person name="Mohammed S."/>
        </authorList>
    </citation>
    <scope>PHOSPHORYLATION [LARGE SCALE ANALYSIS] AT SER-559</scope>
    <scope>IDENTIFICATION BY MASS SPECTROMETRY [LARGE SCALE ANALYSIS]</scope>
    <source>
        <tissue>Cervix carcinoma</tissue>
        <tissue>Erythroleukemia</tissue>
    </source>
</reference>
<reference key="8">
    <citation type="journal article" date="2014" name="Anal. Biochem.">
        <title>Cell-free identification of novel N-myristoylated proteins from complementary DNA resources using bioorthogonal myristic acid analogues.</title>
        <authorList>
            <person name="Takamitsu E."/>
            <person name="Fukunaga K."/>
            <person name="Iio Y."/>
            <person name="Moriya K."/>
            <person name="Utsumi T."/>
        </authorList>
    </citation>
    <scope>MYRISTOYLATION AT GLY-2</scope>
    <scope>SUBCELLULAR LOCATION</scope>
    <scope>MUTAGENESIS OF GLY-2</scope>
</reference>
<reference key="9">
    <citation type="journal article" date="2016" name="Biochim. Biophys. Acta">
        <title>Antagonizing effect of CLPABP on the function of HuR as a regulator of ARE-containing leptin mRNA stability and the effect of its depletion on obesity in old male mouse.</title>
        <authorList>
            <person name="Nishino T."/>
            <person name="Matsunaga R."/>
            <person name="Jikihara H."/>
            <person name="Uchida M."/>
            <person name="Maeda A."/>
            <person name="Qi G."/>
            <person name="Abe T."/>
            <person name="Kiyonari H."/>
            <person name="Tashiro S."/>
            <person name="Inagaki-Ohara K."/>
            <person name="Shimamoto F."/>
            <person name="Konishi H."/>
        </authorList>
    </citation>
    <scope>INTERACTION WITH ELAVL1</scope>
    <scope>SUBCELLULAR LOCATION</scope>
</reference>
<reference key="10">
    <citation type="journal article" date="2018" name="Biochem. Biophys. Res. Commun.">
        <title>Role of N-myristoylation in stability and subcellular localization of the CLPABP protein.</title>
        <authorList>
            <person name="Maeda A."/>
            <person name="Uchida M."/>
            <person name="Nishikawa S."/>
            <person name="Nishino T."/>
            <person name="Konishi H."/>
        </authorList>
    </citation>
    <scope>FUNCTION</scope>
    <scope>MYRISTOYLATION AT GLY-2</scope>
    <scope>SUBCELLULAR LOCATION</scope>
    <scope>MUTAGENESIS OF GLY-2</scope>
    <scope>DOMAIN PH</scope>
</reference>
<reference key="11">
    <citation type="journal article" date="2018" name="Cell. Death. Discov.">
        <title>PLEKHN1 promotes apoptosis by enhancing Bax-Bak hetero-oligomerization through interaction with Bid in human colon cancer.</title>
        <authorList>
            <person name="Kuriyama S."/>
            <person name="Tsuji T."/>
            <person name="Sakuma T."/>
            <person name="Yamamoto T."/>
            <person name="Tanaka M."/>
        </authorList>
    </citation>
    <scope>FUNCTION</scope>
    <scope>SUBCELLULAR LOCATION</scope>
    <scope>INDUCTION</scope>
    <scope>TISSUE SPECIFICITY</scope>
    <scope>INTERACTION WITH BID</scope>
</reference>
<accession>Q494U1</accession>
<accession>Q494U2</accession>
<accession>Q5SV98</accession>
<accession>Q9H0M7</accession>
<comment type="function">
    <text evidence="1 4 7 8">Controls the stability of the leptin mRNA harboring an AU-rich element (ARE) in its 3' UTR, in cooperation with the RNA stabilizer ELAVL1 (PubMed:29180010). Decreases the stability of the leptin mRNA by antagonizing the function of ELAVL1 by inducing its atypical recruitment from the nucleus to the cytosol (By similarity). Binds to cardiolipin (CL), phosphatidic acid (PA), phosphatidylinositol 4-phosphate (PtdIns(4)P) and phosphatidylserine (PS) (PubMed:18191643). Promotes apoptosis by enhancing BAX-BAK hetero-oligomerization via interaction with BID in colon cancer cells (By similarity) (PubMed:29531808).</text>
</comment>
<comment type="subunit">
    <text evidence="4 8">Found in a complex with cytochrome c mRNA and various ribosomal proteins. Interacts with C1QBP (PubMed:18191643). Interacts with ELAVL1 (PubMed:18191643, PubMed:29531808). Interacts with BID (PubMed:29531808).</text>
</comment>
<comment type="interaction">
    <interactant intactId="EBI-10241513">
        <id>Q494U1</id>
    </interactant>
    <interactant intactId="EBI-741724">
        <id>Q8NA61</id>
        <label>CBY2</label>
    </interactant>
    <organismsDiffer>false</organismsDiffer>
    <experiments>3</experiments>
</comment>
<comment type="interaction">
    <interactant intactId="EBI-10241513">
        <id>Q494U1</id>
    </interactant>
    <interactant intactId="EBI-744222">
        <id>O60711</id>
        <label>LPXN</label>
    </interactant>
    <organismsDiffer>false</organismsDiffer>
    <experiments>3</experiments>
</comment>
<comment type="interaction">
    <interactant intactId="EBI-10241513">
        <id>Q494U1</id>
    </interactant>
    <interactant intactId="EBI-741037">
        <id>Q9BRK4</id>
        <label>LZTS2</label>
    </interactant>
    <organismsDiffer>false</organismsDiffer>
    <experiments>3</experiments>
</comment>
<comment type="interaction">
    <interactant intactId="EBI-10241513">
        <id>Q494U1</id>
    </interactant>
    <interactant intactId="EBI-307352">
        <id>Q04864</id>
        <label>REL</label>
    </interactant>
    <organismsDiffer>false</organismsDiffer>
    <experiments>4</experiments>
</comment>
<comment type="interaction">
    <interactant intactId="EBI-10241513">
        <id>Q494U1</id>
    </interactant>
    <interactant intactId="EBI-746118">
        <id>Q8HWS3</id>
        <label>RFX6</label>
    </interactant>
    <organismsDiffer>false</organismsDiffer>
    <experiments>3</experiments>
</comment>
<comment type="interaction">
    <interactant intactId="EBI-10241513">
        <id>Q494U1</id>
    </interactant>
    <interactant intactId="EBI-529518">
        <id>Q86VP1</id>
        <label>TAX1BP1</label>
    </interactant>
    <organismsDiffer>false</organismsDiffer>
    <experiments>4</experiments>
</comment>
<comment type="interaction">
    <interactant intactId="EBI-10241513">
        <id>Q494U1</id>
    </interactant>
    <interactant intactId="EBI-533224">
        <id>P15884</id>
        <label>TCF4</label>
    </interactant>
    <organismsDiffer>false</organismsDiffer>
    <experiments>4</experiments>
</comment>
<comment type="interaction">
    <interactant intactId="EBI-10241513">
        <id>Q494U1</id>
    </interactant>
    <interactant intactId="EBI-10175039">
        <id>Q13625-3</id>
        <label>TP53BP2</label>
    </interactant>
    <organismsDiffer>false</organismsDiffer>
    <experiments>3</experiments>
</comment>
<comment type="interaction">
    <interactant intactId="EBI-10241513">
        <id>Q494U1</id>
    </interactant>
    <interactant intactId="EBI-359224">
        <id>Q13077</id>
        <label>TRAF1</label>
    </interactant>
    <organismsDiffer>false</organismsDiffer>
    <experiments>4</experiments>
</comment>
<comment type="interaction">
    <interactant intactId="EBI-10241513">
        <id>Q494U1</id>
    </interactant>
    <interactant intactId="EBI-719493">
        <id>P14373</id>
        <label>TRIM27</label>
    </interactant>
    <organismsDiffer>false</organismsDiffer>
    <experiments>3</experiments>
</comment>
<comment type="interaction">
    <interactant intactId="EBI-10241513">
        <id>Q494U1</id>
    </interactant>
    <interactant intactId="EBI-26359852">
        <id>Q5ZXN6</id>
        <label>ankX</label>
    </interactant>
    <organismsDiffer>true</organismsDiffer>
    <experiments>7</experiments>
</comment>
<comment type="interaction">
    <interactant intactId="EBI-12014286">
        <id>Q494U1-3</id>
    </interactant>
    <interactant intactId="EBI-11096309">
        <id>Q9NYB9-2</id>
        <label>ABI2</label>
    </interactant>
    <organismsDiffer>false</organismsDiffer>
    <experiments>3</experiments>
</comment>
<comment type="interaction">
    <interactant intactId="EBI-12014286">
        <id>Q494U1-3</id>
    </interactant>
    <interactant intactId="EBI-357530">
        <id>Q9ULX6</id>
        <label>AKAP8L</label>
    </interactant>
    <organismsDiffer>false</organismsDiffer>
    <experiments>3</experiments>
</comment>
<comment type="interaction">
    <interactant intactId="EBI-12014286">
        <id>Q494U1-3</id>
    </interactant>
    <interactant intactId="EBI-948603">
        <id>Q03989</id>
        <label>ARID5A</label>
    </interactant>
    <organismsDiffer>false</organismsDiffer>
    <experiments>3</experiments>
</comment>
<comment type="interaction">
    <interactant intactId="EBI-12014286">
        <id>Q494U1-3</id>
    </interactant>
    <interactant intactId="EBI-930964">
        <id>P54253</id>
        <label>ATXN1</label>
    </interactant>
    <organismsDiffer>false</organismsDiffer>
    <experiments>6</experiments>
</comment>
<comment type="interaction">
    <interactant intactId="EBI-12014286">
        <id>Q494U1-3</id>
    </interactant>
    <interactant intactId="EBI-739580">
        <id>Q13137</id>
        <label>CALCOCO2</label>
    </interactant>
    <organismsDiffer>false</organismsDiffer>
    <experiments>3</experiments>
</comment>
<comment type="interaction">
    <interactant intactId="EBI-12014286">
        <id>Q494U1-3</id>
    </interactant>
    <interactant intactId="EBI-11524851">
        <id>Q8NA61-2</id>
        <label>CBY2</label>
    </interactant>
    <organismsDiffer>false</organismsDiffer>
    <experiments>3</experiments>
</comment>
<comment type="interaction">
    <interactant intactId="EBI-12014286">
        <id>Q494U1-3</id>
    </interactant>
    <interactant intactId="EBI-3867333">
        <id>A8MQ03</id>
        <label>CYSRT1</label>
    </interactant>
    <organismsDiffer>false</organismsDiffer>
    <experiments>3</experiments>
</comment>
<comment type="interaction">
    <interactant intactId="EBI-12014286">
        <id>Q494U1-3</id>
    </interactant>
    <interactant intactId="EBI-750641">
        <id>Q5TD97</id>
        <label>FHL5</label>
    </interactant>
    <organismsDiffer>false</organismsDiffer>
    <experiments>3</experiments>
</comment>
<comment type="interaction">
    <interactant intactId="EBI-12014286">
        <id>Q494U1-3</id>
    </interactant>
    <interactant intactId="EBI-740785">
        <id>P49639</id>
        <label>HOXA1</label>
    </interactant>
    <organismsDiffer>false</organismsDiffer>
    <experiments>3</experiments>
</comment>
<comment type="interaction">
    <interactant intactId="EBI-12014286">
        <id>Q494U1-3</id>
    </interactant>
    <interactant intactId="EBI-948001">
        <id>Q15323</id>
        <label>KRT31</label>
    </interactant>
    <organismsDiffer>false</organismsDiffer>
    <experiments>3</experiments>
</comment>
<comment type="interaction">
    <interactant intactId="EBI-12014286">
        <id>Q494U1-3</id>
    </interactant>
    <interactant intactId="EBI-11958506">
        <id>O76013-2</id>
        <label>KRT36</label>
    </interactant>
    <organismsDiffer>false</organismsDiffer>
    <experiments>3</experiments>
</comment>
<comment type="interaction">
    <interactant intactId="EBI-12014286">
        <id>Q494U1-3</id>
    </interactant>
    <interactant intactId="EBI-10221390">
        <id>P78385</id>
        <label>KRT83</label>
    </interactant>
    <organismsDiffer>false</organismsDiffer>
    <experiments>3</experiments>
</comment>
<comment type="interaction">
    <interactant intactId="EBI-12014286">
        <id>Q494U1-3</id>
    </interactant>
    <interactant intactId="EBI-11749135">
        <id>Q8IUG1</id>
        <label>KRTAP1-3</label>
    </interactant>
    <organismsDiffer>false</organismsDiffer>
    <experiments>3</experiments>
</comment>
<comment type="interaction">
    <interactant intactId="EBI-12014286">
        <id>Q494U1-3</id>
    </interactant>
    <interactant intactId="EBI-12805508">
        <id>Q3LI70</id>
        <label>KRTAP19-6</label>
    </interactant>
    <organismsDiffer>false</organismsDiffer>
    <experiments>3</experiments>
</comment>
<comment type="interaction">
    <interactant intactId="EBI-12014286">
        <id>Q494U1-3</id>
    </interactant>
    <interactant intactId="EBI-11962084">
        <id>Q3LI66</id>
        <label>KRTAP6-2</label>
    </interactant>
    <organismsDiffer>false</organismsDiffer>
    <experiments>3</experiments>
</comment>
<comment type="interaction">
    <interactant intactId="EBI-12014286">
        <id>Q494U1-3</id>
    </interactant>
    <interactant intactId="EBI-744222">
        <id>O60711</id>
        <label>LPXN</label>
    </interactant>
    <organismsDiffer>false</organismsDiffer>
    <experiments>3</experiments>
</comment>
<comment type="interaction">
    <interactant intactId="EBI-12014286">
        <id>Q494U1-3</id>
    </interactant>
    <interactant intactId="EBI-11522433">
        <id>Q5JR59-3</id>
        <label>MTUS2</label>
    </interactant>
    <organismsDiffer>false</organismsDiffer>
    <experiments>3</experiments>
</comment>
<comment type="interaction">
    <interactant intactId="EBI-12014286">
        <id>Q494U1-3</id>
    </interactant>
    <interactant intactId="EBI-10271199">
        <id>Q8NI38</id>
        <label>NFKBID</label>
    </interactant>
    <organismsDiffer>false</organismsDiffer>
    <experiments>3</experiments>
</comment>
<comment type="interaction">
    <interactant intactId="EBI-12014286">
        <id>Q494U1-3</id>
    </interactant>
    <interactant intactId="EBI-22310682">
        <id>P0DPK4</id>
        <label>NOTCH2NLC</label>
    </interactant>
    <organismsDiffer>false</organismsDiffer>
    <experiments>3</experiments>
</comment>
<comment type="interaction">
    <interactant intactId="EBI-12014286">
        <id>Q494U1-3</id>
    </interactant>
    <interactant intactId="EBI-350517">
        <id>Q9NR12</id>
        <label>PDLIM7</label>
    </interactant>
    <organismsDiffer>false</organismsDiffer>
    <experiments>3</experiments>
</comment>
<comment type="interaction">
    <interactant intactId="EBI-12014286">
        <id>Q494U1-3</id>
    </interactant>
    <interactant intactId="EBI-357318">
        <id>Q9NWS0</id>
        <label>PIH1D1</label>
    </interactant>
    <organismsDiffer>false</organismsDiffer>
    <experiments>3</experiments>
</comment>
<comment type="interaction">
    <interactant intactId="EBI-12014286">
        <id>Q494U1-3</id>
    </interactant>
    <interactant intactId="EBI-13292717">
        <id>Q5JR12</id>
        <label>PPM1J</label>
    </interactant>
    <organismsDiffer>false</organismsDiffer>
    <experiments>3</experiments>
</comment>
<comment type="interaction">
    <interactant intactId="EBI-12014286">
        <id>Q494U1-3</id>
    </interactant>
    <interactant intactId="EBI-10293968">
        <id>Q96T49</id>
        <label>PPP1R16B</label>
    </interactant>
    <organismsDiffer>false</organismsDiffer>
    <experiments>3</experiments>
</comment>
<comment type="interaction">
    <interactant intactId="EBI-12014286">
        <id>Q494U1-3</id>
    </interactant>
    <interactant intactId="EBI-1383852">
        <id>P54646</id>
        <label>PRKAA2</label>
    </interactant>
    <organismsDiffer>false</organismsDiffer>
    <experiments>3</experiments>
</comment>
<comment type="interaction">
    <interactant intactId="EBI-12014286">
        <id>Q494U1-3</id>
    </interactant>
    <interactant intactId="EBI-11954250">
        <id>P49023-2</id>
        <label>PXN</label>
    </interactant>
    <organismsDiffer>false</organismsDiffer>
    <experiments>3</experiments>
</comment>
<comment type="interaction">
    <interactant intactId="EBI-12014286">
        <id>Q494U1-3</id>
    </interactant>
    <interactant intactId="EBI-10829018">
        <id>Q04864-2</id>
        <label>REL</label>
    </interactant>
    <organismsDiffer>false</organismsDiffer>
    <experiments>3</experiments>
</comment>
<comment type="interaction">
    <interactant intactId="EBI-12014286">
        <id>Q494U1-3</id>
    </interactant>
    <interactant intactId="EBI-12000762">
        <id>Q7Z5V6-2</id>
        <label>SAXO4</label>
    </interactant>
    <organismsDiffer>false</organismsDiffer>
    <experiments>3</experiments>
</comment>
<comment type="interaction">
    <interactant intactId="EBI-12014286">
        <id>Q494U1-3</id>
    </interactant>
    <interactant intactId="EBI-741237">
        <id>O60504</id>
        <label>SORBS3</label>
    </interactant>
    <organismsDiffer>false</organismsDiffer>
    <experiments>3</experiments>
</comment>
<comment type="interaction">
    <interactant intactId="EBI-12014286">
        <id>Q494U1-3</id>
    </interactant>
    <interactant intactId="EBI-529518">
        <id>Q86VP1</id>
        <label>TAX1BP1</label>
    </interactant>
    <organismsDiffer>false</organismsDiffer>
    <experiments>3</experiments>
</comment>
<comment type="interaction">
    <interactant intactId="EBI-12014286">
        <id>Q494U1-3</id>
    </interactant>
    <interactant intactId="EBI-11952721">
        <id>Q05BL1</id>
        <label>TP53BP2</label>
    </interactant>
    <organismsDiffer>false</organismsDiffer>
    <experiments>3</experiments>
</comment>
<comment type="interaction">
    <interactant intactId="EBI-12014286">
        <id>Q494U1-3</id>
    </interactant>
    <interactant intactId="EBI-359224">
        <id>Q13077</id>
        <label>TRAF1</label>
    </interactant>
    <organismsDiffer>false</organismsDiffer>
    <experiments>3</experiments>
</comment>
<comment type="interaction">
    <interactant intactId="EBI-12014286">
        <id>Q494U1-3</id>
    </interactant>
    <interactant intactId="EBI-742327">
        <id>Q15654</id>
        <label>TRIP6</label>
    </interactant>
    <organismsDiffer>false</organismsDiffer>
    <experiments>3</experiments>
</comment>
<comment type="interaction">
    <interactant intactId="EBI-12014286">
        <id>Q494U1-3</id>
    </interactant>
    <interactant intactId="EBI-11975223">
        <id>Q70EL1-9</id>
        <label>USP54</label>
    </interactant>
    <organismsDiffer>false</organismsDiffer>
    <experiments>3</experiments>
</comment>
<comment type="interaction">
    <interactant intactId="EBI-12014286">
        <id>Q494U1-3</id>
    </interactant>
    <interactant intactId="EBI-12040603">
        <id>Q9NZC7-5</id>
        <label>WWOX</label>
    </interactant>
    <organismsDiffer>false</organismsDiffer>
    <experiments>3</experiments>
</comment>
<comment type="interaction">
    <interactant intactId="EBI-12014286">
        <id>Q494U1-3</id>
    </interactant>
    <interactant intactId="EBI-747993">
        <id>Q9NQZ6</id>
        <label>ZC4H2</label>
    </interactant>
    <organismsDiffer>false</organismsDiffer>
    <experiments>3</experiments>
</comment>
<comment type="interaction">
    <interactant intactId="EBI-12014286">
        <id>Q494U1-3</id>
    </interactant>
    <interactant intactId="EBI-11962468">
        <id>Q7Z4V0</id>
        <label>ZNF438</label>
    </interactant>
    <organismsDiffer>false</organismsDiffer>
    <experiments>3</experiments>
</comment>
<comment type="interaction">
    <interactant intactId="EBI-12014286">
        <id>Q494U1-3</id>
    </interactant>
    <interactant intactId="EBI-527853">
        <id>Q9UGI0</id>
        <label>ZRANB1</label>
    </interactant>
    <organismsDiffer>false</organismsDiffer>
    <experiments>3</experiments>
</comment>
<comment type="subcellular location">
    <subcellularLocation>
        <location evidence="5">Cell membrane</location>
        <topology evidence="5">Lipid-anchor</topology>
    </subcellularLocation>
    <subcellularLocation>
        <location evidence="6 8">Mitochondrion</location>
    </subcellularLocation>
    <subcellularLocation>
        <location evidence="4 7">Mitochondrion membrane</location>
    </subcellularLocation>
    <text evidence="4">Interaction with C1QBP and phosphorylation is essential for its mitochondrial localization. Localizes on the microtubule in the form of small granules.</text>
</comment>
<comment type="alternative products">
    <event type="alternative splicing"/>
    <isoform>
        <id>Q494U1-1</id>
        <name>1</name>
        <sequence type="displayed"/>
    </isoform>
    <isoform>
        <id>Q494U1-2</id>
        <name>2</name>
        <sequence type="described" ref="VSP_059838 VSP_059839"/>
    </isoform>
    <isoform>
        <id>Q494U1-3</id>
        <name>3</name>
        <sequence type="described" ref="VSP_059839 VSP_059840"/>
    </isoform>
</comment>
<comment type="tissue specificity">
    <text evidence="4 8">Ubiquitous (PubMed:18191643). Epressed in several cancer cell lines of differing origin (PubMed:29531808).</text>
</comment>
<comment type="induction">
    <text evidence="8">Up-regulated by hypoxia.</text>
</comment>
<comment type="domain">
    <text evidence="4 7">Both PH domains are essential for its mitochondrial localization.</text>
</comment>
<comment type="PTM">
    <text evidence="4">Phosphorylation is essential for its mitochondrial localization and regulates its interaction with C1QBP.</text>
</comment>
<sequence length="611" mass="66409">MGNSHCVPQAPRRLRASFSRKPSLKGNREDSARMSAGLPGPEAARSGDAAANKLFHYIPGTDILDLENQRENLEQPFLSVFKKGRRRVPVRNLGKVVHYAKVQLRFQHSQDVSDCYLELFPAHLYFQAHGSEGLTFQGLLPLTELSVCPLEGSREHAFQITGPLPAPLLVLCPSRAELDRWLYHLEKQTALLGGPRRCHSAPPQRRLTRLRTASGHEPGGSAVCASRVKLQHLPAQEQWDRLLVLYPTSLAIFSEELDGLCFKGELPLRAVHINLEEKEKQIRSFLIEGPLINTIRVVCASYEDYGHWLLCLRAVTHREGAPPLPGAESFPGSQVMGSGRGSLSSGGQTSWDSGCLAPPSTRTSHSLPESSVPSTVGCSSQHTPDQANSDRASIGRRRTELRRSGSSRSPGSKARAEGRGPVTPLHLDLTQLHRLSLESSPDAPDHTSETSHSPLYADPYTPPATSHRRVTDVRGLEEFLSAMQSARGPTPSSPLPSVPVSVPASDPRSCSSGPAGPYLLSKKGALQSRAAQRHRGSAKDGGPQPPDAPQLVSSAREGSPEPWLPLTDGRSPRRSRDPGYDHLWDETLSSSHQKCPQLGGPEASGGLVQWI</sequence>